<organism>
    <name type="scientific">Bos taurus</name>
    <name type="common">Bovine</name>
    <dbReference type="NCBI Taxonomy" id="9913"/>
    <lineage>
        <taxon>Eukaryota</taxon>
        <taxon>Metazoa</taxon>
        <taxon>Chordata</taxon>
        <taxon>Craniata</taxon>
        <taxon>Vertebrata</taxon>
        <taxon>Euteleostomi</taxon>
        <taxon>Mammalia</taxon>
        <taxon>Eutheria</taxon>
        <taxon>Laurasiatheria</taxon>
        <taxon>Artiodactyla</taxon>
        <taxon>Ruminantia</taxon>
        <taxon>Pecora</taxon>
        <taxon>Bovidae</taxon>
        <taxon>Bovinae</taxon>
        <taxon>Bos</taxon>
    </lineage>
</organism>
<name>ZN410_BOVIN</name>
<sequence length="467" mass="50860">MLSDELESKPELLVQFVQNTSIPLGQGLVESEAKDITCLSLLPVTEASECSRLMLPDDTPNHTNSSKEVPSSAVLRSLQVNVGPDGEETRAQTVQKSPEFLSTPESPSLLQDLQPSDSTSFILLNLTRAGLGSSAEHLVFVQDEADDSGNDFLSSESTDSSIPWFLRVQELAHDSLIAATRAQLAKNAKTSSNGENVHLGSGDGQPKDSGPLPQMEKKLKCTVEGCDRTFVWPAHFKYHLKTHRNDRSFICPAAGCGKSFYVLQRLKVHMRTHNGEKPFVCPESNCGKQFTTAGNLKNHLRIHTGEKPFLCEAQGCGRSFAEYSSLRKHLVVHSGEKPHQCQVCGKTFSQSGSRNVHMRKHHLQMGAAGSQEQEPAAEPLMGSSLLEEASVTSKNLVSMNSQPSLGGESLNLPNTNSILGVDDEVLAEGSPRPLSSVPDVTHHLVTMQSGRQSYELLNQGDLTERRT</sequence>
<protein>
    <recommendedName>
        <fullName evidence="4">Zinc finger protein 410</fullName>
    </recommendedName>
</protein>
<evidence type="ECO:0000250" key="1">
    <source>
        <dbReference type="UniProtKB" id="Q86VK4"/>
    </source>
</evidence>
<evidence type="ECO:0000255" key="2">
    <source>
        <dbReference type="PROSITE-ProRule" id="PRU00042"/>
    </source>
</evidence>
<evidence type="ECO:0000256" key="3">
    <source>
        <dbReference type="SAM" id="MobiDB-lite"/>
    </source>
</evidence>
<evidence type="ECO:0000305" key="4"/>
<proteinExistence type="evidence at transcript level"/>
<reference key="1">
    <citation type="journal article" date="2005" name="BMC Genomics">
        <title>Characterization of 954 bovine full-CDS cDNA sequences.</title>
        <authorList>
            <person name="Harhay G.P."/>
            <person name="Sonstegard T.S."/>
            <person name="Keele J.W."/>
            <person name="Heaton M.P."/>
            <person name="Clawson M.L."/>
            <person name="Snelling W.M."/>
            <person name="Wiedmann R.T."/>
            <person name="Van Tassell C.P."/>
            <person name="Smith T.P.L."/>
        </authorList>
    </citation>
    <scope>NUCLEOTIDE SEQUENCE [LARGE SCALE MRNA]</scope>
</reference>
<dbReference type="EMBL" id="BT020644">
    <property type="protein sequence ID" value="AAX08661.1"/>
    <property type="molecule type" value="mRNA"/>
</dbReference>
<dbReference type="RefSeq" id="NP_001019662.3">
    <property type="nucleotide sequence ID" value="NM_001024491.4"/>
</dbReference>
<dbReference type="RefSeq" id="NP_001029781.1">
    <property type="nucleotide sequence ID" value="NM_001034609.1"/>
</dbReference>
<dbReference type="SMR" id="Q5EAC5"/>
<dbReference type="FunCoup" id="Q5EAC5">
    <property type="interactions" value="3645"/>
</dbReference>
<dbReference type="STRING" id="9913.ENSBTAP00000040756"/>
<dbReference type="PaxDb" id="9913-ENSBTAP00000040756"/>
<dbReference type="Ensembl" id="ENSBTAT00000027088.5">
    <property type="protein sequence ID" value="ENSBTAP00000027088.4"/>
    <property type="gene ID" value="ENSBTAG00000020327.6"/>
</dbReference>
<dbReference type="GeneID" id="507530"/>
<dbReference type="KEGG" id="bta:507530"/>
<dbReference type="CTD" id="57862"/>
<dbReference type="VEuPathDB" id="HostDB:ENSBTAG00000020327"/>
<dbReference type="VGNC" id="VGNC:37271">
    <property type="gene designation" value="ZNF410"/>
</dbReference>
<dbReference type="eggNOG" id="KOG1721">
    <property type="taxonomic scope" value="Eukaryota"/>
</dbReference>
<dbReference type="GeneTree" id="ENSGT00940000158098"/>
<dbReference type="HOGENOM" id="CLU_043629_1_0_1"/>
<dbReference type="InParanoid" id="Q5EAC5"/>
<dbReference type="OrthoDB" id="5977959at2759"/>
<dbReference type="Proteomes" id="UP000009136">
    <property type="component" value="Chromosome 10"/>
</dbReference>
<dbReference type="Bgee" id="ENSBTAG00000020327">
    <property type="expression patterns" value="Expressed in thymus and 106 other cell types or tissues"/>
</dbReference>
<dbReference type="GO" id="GO:0005694">
    <property type="term" value="C:chromosome"/>
    <property type="evidence" value="ECO:0007669"/>
    <property type="project" value="UniProtKB-SubCell"/>
</dbReference>
<dbReference type="GO" id="GO:0005634">
    <property type="term" value="C:nucleus"/>
    <property type="evidence" value="ECO:0000318"/>
    <property type="project" value="GO_Central"/>
</dbReference>
<dbReference type="GO" id="GO:0003700">
    <property type="term" value="F:DNA-binding transcription factor activity"/>
    <property type="evidence" value="ECO:0007669"/>
    <property type="project" value="Ensembl"/>
</dbReference>
<dbReference type="GO" id="GO:0000978">
    <property type="term" value="F:RNA polymerase II cis-regulatory region sequence-specific DNA binding"/>
    <property type="evidence" value="ECO:0007669"/>
    <property type="project" value="Ensembl"/>
</dbReference>
<dbReference type="GO" id="GO:0003712">
    <property type="term" value="F:transcription coregulator activity"/>
    <property type="evidence" value="ECO:0000318"/>
    <property type="project" value="GO_Central"/>
</dbReference>
<dbReference type="GO" id="GO:0008270">
    <property type="term" value="F:zinc ion binding"/>
    <property type="evidence" value="ECO:0007669"/>
    <property type="project" value="UniProtKB-KW"/>
</dbReference>
<dbReference type="GO" id="GO:0010629">
    <property type="term" value="P:negative regulation of gene expression"/>
    <property type="evidence" value="ECO:0007669"/>
    <property type="project" value="Ensembl"/>
</dbReference>
<dbReference type="GO" id="GO:0045944">
    <property type="term" value="P:positive regulation of transcription by RNA polymerase II"/>
    <property type="evidence" value="ECO:0007669"/>
    <property type="project" value="Ensembl"/>
</dbReference>
<dbReference type="GO" id="GO:0006357">
    <property type="term" value="P:regulation of transcription by RNA polymerase II"/>
    <property type="evidence" value="ECO:0000318"/>
    <property type="project" value="GO_Central"/>
</dbReference>
<dbReference type="FunFam" id="3.30.160.60:FF:000071">
    <property type="entry name" value="Putative zinc finger protein 143"/>
    <property type="match status" value="1"/>
</dbReference>
<dbReference type="FunFam" id="3.30.160.60:FF:000221">
    <property type="entry name" value="Zinc finger protein 410"/>
    <property type="match status" value="1"/>
</dbReference>
<dbReference type="FunFam" id="3.30.160.60:FF:000462">
    <property type="entry name" value="Zinc finger protein 410"/>
    <property type="match status" value="1"/>
</dbReference>
<dbReference type="FunFam" id="3.30.160.60:FF:000441">
    <property type="entry name" value="zinc finger protein 410 isoform X1"/>
    <property type="match status" value="1"/>
</dbReference>
<dbReference type="Gene3D" id="3.30.160.60">
    <property type="entry name" value="Classic Zinc Finger"/>
    <property type="match status" value="5"/>
</dbReference>
<dbReference type="InterPro" id="IPR036236">
    <property type="entry name" value="Znf_C2H2_sf"/>
</dbReference>
<dbReference type="InterPro" id="IPR013087">
    <property type="entry name" value="Znf_C2H2_type"/>
</dbReference>
<dbReference type="PANTHER" id="PTHR14003">
    <property type="entry name" value="TRANSCRIPTIONAL REPRESSOR PROTEIN YY"/>
    <property type="match status" value="1"/>
</dbReference>
<dbReference type="PANTHER" id="PTHR14003:SF24">
    <property type="entry name" value="ZINC FINGER PROTEIN 410"/>
    <property type="match status" value="1"/>
</dbReference>
<dbReference type="Pfam" id="PF00096">
    <property type="entry name" value="zf-C2H2"/>
    <property type="match status" value="4"/>
</dbReference>
<dbReference type="SMART" id="SM00355">
    <property type="entry name" value="ZnF_C2H2"/>
    <property type="match status" value="5"/>
</dbReference>
<dbReference type="SUPFAM" id="SSF57667">
    <property type="entry name" value="beta-beta-alpha zinc fingers"/>
    <property type="match status" value="3"/>
</dbReference>
<dbReference type="PROSITE" id="PS00028">
    <property type="entry name" value="ZINC_FINGER_C2H2_1"/>
    <property type="match status" value="5"/>
</dbReference>
<dbReference type="PROSITE" id="PS50157">
    <property type="entry name" value="ZINC_FINGER_C2H2_2"/>
    <property type="match status" value="5"/>
</dbReference>
<feature type="chain" id="PRO_0000291553" description="Zinc finger protein 410">
    <location>
        <begin position="1"/>
        <end position="467"/>
    </location>
</feature>
<feature type="zinc finger region" description="C2H2-type 1" evidence="2">
    <location>
        <begin position="219"/>
        <end position="243"/>
    </location>
</feature>
<feature type="zinc finger region" description="C2H2-type 2" evidence="2">
    <location>
        <begin position="249"/>
        <end position="273"/>
    </location>
</feature>
<feature type="zinc finger region" description="C2H2-type 3" evidence="2">
    <location>
        <begin position="279"/>
        <end position="303"/>
    </location>
</feature>
<feature type="zinc finger region" description="C2H2-type 4" evidence="2">
    <location>
        <begin position="309"/>
        <end position="333"/>
    </location>
</feature>
<feature type="zinc finger region" description="C2H2-type 5" evidence="2">
    <location>
        <begin position="339"/>
        <end position="362"/>
    </location>
</feature>
<feature type="region of interest" description="Disordered" evidence="3">
    <location>
        <begin position="84"/>
        <end position="111"/>
    </location>
</feature>
<feature type="region of interest" description="Disordered" evidence="3">
    <location>
        <begin position="187"/>
        <end position="214"/>
    </location>
</feature>
<feature type="binding site" evidence="1">
    <location>
        <position position="221"/>
    </location>
    <ligand>
        <name>Zn(2+)</name>
        <dbReference type="ChEBI" id="CHEBI:29105"/>
        <label>1</label>
        <note>structural</note>
    </ligand>
</feature>
<feature type="binding site" evidence="1">
    <location>
        <position position="226"/>
    </location>
    <ligand>
        <name>Zn(2+)</name>
        <dbReference type="ChEBI" id="CHEBI:29105"/>
        <label>1</label>
        <note>structural</note>
    </ligand>
</feature>
<feature type="binding site" evidence="1">
    <location>
        <position position="239"/>
    </location>
    <ligand>
        <name>Zn(2+)</name>
        <dbReference type="ChEBI" id="CHEBI:29105"/>
        <label>1</label>
        <note>structural</note>
    </ligand>
</feature>
<feature type="binding site" evidence="1">
    <location>
        <position position="243"/>
    </location>
    <ligand>
        <name>Zn(2+)</name>
        <dbReference type="ChEBI" id="CHEBI:29105"/>
        <label>1</label>
        <note>structural</note>
    </ligand>
</feature>
<feature type="binding site" evidence="1">
    <location>
        <position position="251"/>
    </location>
    <ligand>
        <name>Zn(2+)</name>
        <dbReference type="ChEBI" id="CHEBI:29105"/>
        <label>2</label>
        <note>structural</note>
    </ligand>
</feature>
<feature type="binding site" evidence="1">
    <location>
        <position position="256"/>
    </location>
    <ligand>
        <name>Zn(2+)</name>
        <dbReference type="ChEBI" id="CHEBI:29105"/>
        <label>2</label>
        <note>structural</note>
    </ligand>
</feature>
<feature type="binding site" evidence="1">
    <location>
        <position position="269"/>
    </location>
    <ligand>
        <name>Zn(2+)</name>
        <dbReference type="ChEBI" id="CHEBI:29105"/>
        <label>2</label>
        <note>structural</note>
    </ligand>
</feature>
<feature type="binding site" evidence="1">
    <location>
        <position position="273"/>
    </location>
    <ligand>
        <name>Zn(2+)</name>
        <dbReference type="ChEBI" id="CHEBI:29105"/>
        <label>2</label>
        <note>structural</note>
    </ligand>
</feature>
<feature type="binding site" evidence="1">
    <location>
        <position position="281"/>
    </location>
    <ligand>
        <name>Zn(2+)</name>
        <dbReference type="ChEBI" id="CHEBI:29105"/>
        <label>3</label>
        <note>structural</note>
    </ligand>
</feature>
<feature type="binding site" evidence="1">
    <location>
        <position position="286"/>
    </location>
    <ligand>
        <name>Zn(2+)</name>
        <dbReference type="ChEBI" id="CHEBI:29105"/>
        <label>3</label>
        <note>structural</note>
    </ligand>
</feature>
<feature type="binding site" evidence="1">
    <location>
        <position position="299"/>
    </location>
    <ligand>
        <name>Zn(2+)</name>
        <dbReference type="ChEBI" id="CHEBI:29105"/>
        <label>3</label>
        <note>structural</note>
    </ligand>
</feature>
<feature type="binding site" evidence="1">
    <location>
        <position position="303"/>
    </location>
    <ligand>
        <name>Zn(2+)</name>
        <dbReference type="ChEBI" id="CHEBI:29105"/>
        <label>3</label>
        <note>structural</note>
    </ligand>
</feature>
<feature type="binding site" evidence="1">
    <location>
        <position position="311"/>
    </location>
    <ligand>
        <name>Zn(2+)</name>
        <dbReference type="ChEBI" id="CHEBI:29105"/>
        <label>4</label>
        <note>structural</note>
    </ligand>
</feature>
<feature type="binding site" evidence="1">
    <location>
        <position position="316"/>
    </location>
    <ligand>
        <name>Zn(2+)</name>
        <dbReference type="ChEBI" id="CHEBI:29105"/>
        <label>4</label>
        <note>structural</note>
    </ligand>
</feature>
<feature type="binding site" evidence="1">
    <location>
        <position position="329"/>
    </location>
    <ligand>
        <name>Zn(2+)</name>
        <dbReference type="ChEBI" id="CHEBI:29105"/>
        <label>4</label>
        <note>structural</note>
    </ligand>
</feature>
<feature type="binding site" evidence="1">
    <location>
        <position position="333"/>
    </location>
    <ligand>
        <name>Zn(2+)</name>
        <dbReference type="ChEBI" id="CHEBI:29105"/>
        <label>4</label>
        <note>structural</note>
    </ligand>
</feature>
<feature type="binding site" evidence="1">
    <location>
        <position position="341"/>
    </location>
    <ligand>
        <name>Zn(2+)</name>
        <dbReference type="ChEBI" id="CHEBI:29105"/>
        <label>5</label>
        <note>structural</note>
    </ligand>
</feature>
<feature type="binding site" evidence="1">
    <location>
        <position position="344"/>
    </location>
    <ligand>
        <name>Zn(2+)</name>
        <dbReference type="ChEBI" id="CHEBI:29105"/>
        <label>5</label>
        <note>structural</note>
    </ligand>
</feature>
<feature type="binding site" evidence="1">
    <location>
        <position position="357"/>
    </location>
    <ligand>
        <name>Zn(2+)</name>
        <dbReference type="ChEBI" id="CHEBI:29105"/>
        <label>5</label>
        <note>structural</note>
    </ligand>
</feature>
<feature type="binding site" evidence="1">
    <location>
        <position position="361"/>
    </location>
    <ligand>
        <name>Zn(2+)</name>
        <dbReference type="ChEBI" id="CHEBI:29105"/>
        <label>5</label>
        <note>structural</note>
    </ligand>
</feature>
<comment type="function">
    <text evidence="1">Transcription factor that binds to the sequence motif 5'-CATCCCATAATA-3', and is specifically required to silence expression of fetal hemoglobin in adult erythroid cells. Prevents expression of fetal hemoglobin genes HBG1 and HBG2 through CHD4: acts as a direct transcriptional activator of CHD4, a central component of the NuRD complex that represses transcription of fetal hemoglobin genes HBG1 and HBG2 in erythroid cells. May also activate transcription of matrix-remodeling genes such as MMP1 during fibroblast senescence. May activate transcription of the gap junction gene GJC1, perhaps in response to increasing glucose. However, recent studies suggest that ZNF410 is dedicated to regulate expression of a single gene: CHD4.</text>
</comment>
<comment type="subunit">
    <text evidence="1">Interacts with CDKN2A/p14ARF.</text>
</comment>
<comment type="subcellular location">
    <subcellularLocation>
        <location evidence="1">Nucleus</location>
    </subcellularLocation>
    <subcellularLocation>
        <location evidence="1">Chromosome</location>
    </subcellularLocation>
    <text evidence="1">Directly binds to the sequence motif 5'-CATCCCATAATA-3'.</text>
</comment>
<comment type="domain">
    <text evidence="1">The five zinc finger domains are necessary and sufficient to bind to DNA.</text>
</comment>
<comment type="PTM">
    <text evidence="1">O-glycosylated. O-GlcNAcylation may occur in response to increasing glucose levels and affect transcription factor activity.</text>
</comment>
<comment type="PTM">
    <text evidence="1">Sumoylated. Sumoylation increases its half-life, possibly by blocking ubiquitin-mediated degradation.</text>
</comment>
<keyword id="KW-0010">Activator</keyword>
<keyword id="KW-0158">Chromosome</keyword>
<keyword id="KW-0238">DNA-binding</keyword>
<keyword id="KW-0325">Glycoprotein</keyword>
<keyword id="KW-0479">Metal-binding</keyword>
<keyword id="KW-0539">Nucleus</keyword>
<keyword id="KW-1185">Reference proteome</keyword>
<keyword id="KW-0677">Repeat</keyword>
<keyword id="KW-0804">Transcription</keyword>
<keyword id="KW-0805">Transcription regulation</keyword>
<keyword id="KW-0832">Ubl conjugation</keyword>
<keyword id="KW-0862">Zinc</keyword>
<keyword id="KW-0863">Zinc-finger</keyword>
<gene>
    <name evidence="1" type="primary">ZNF410</name>
</gene>
<accession>Q5EAC5</accession>